<reference key="1">
    <citation type="journal article" date="2007" name="Nature">
        <title>Evolution of genes and genomes on the Drosophila phylogeny.</title>
        <authorList>
            <consortium name="Drosophila 12 genomes consortium"/>
        </authorList>
    </citation>
    <scope>NUCLEOTIDE SEQUENCE [LARGE SCALE GENOMIC DNA]</scope>
    <source>
        <strain>Tucson 15010-1051.87</strain>
    </source>
</reference>
<protein>
    <recommendedName>
        <fullName evidence="2">Elongation factor G, mitochondrial</fullName>
        <shortName evidence="2">EF-Gmt</shortName>
    </recommendedName>
    <alternativeName>
        <fullName evidence="2">Elongation factor G 1, mitochondrial</fullName>
        <shortName evidence="2">mEF-G 1</shortName>
    </alternativeName>
    <alternativeName>
        <fullName evidence="2">Elongation factor G1</fullName>
    </alternativeName>
</protein>
<proteinExistence type="inferred from homology"/>
<evidence type="ECO:0000250" key="1">
    <source>
        <dbReference type="UniProtKB" id="Q9VM33"/>
    </source>
</evidence>
<evidence type="ECO:0000255" key="2">
    <source>
        <dbReference type="HAMAP-Rule" id="MF_03061"/>
    </source>
</evidence>
<evidence type="ECO:0000305" key="3"/>
<feature type="transit peptide" description="Mitochondrion" evidence="2">
    <location>
        <begin position="1"/>
        <end position="32"/>
    </location>
</feature>
<feature type="chain" id="PRO_0000385552" description="Elongation factor G, mitochondrial">
    <location>
        <begin position="33"/>
        <end position="747"/>
    </location>
</feature>
<feature type="domain" description="tr-type G">
    <location>
        <begin position="42"/>
        <end position="319"/>
    </location>
</feature>
<feature type="binding site" evidence="2">
    <location>
        <begin position="51"/>
        <end position="58"/>
    </location>
    <ligand>
        <name>GTP</name>
        <dbReference type="ChEBI" id="CHEBI:37565"/>
    </ligand>
</feature>
<feature type="binding site" evidence="2">
    <location>
        <begin position="118"/>
        <end position="122"/>
    </location>
    <ligand>
        <name>GTP</name>
        <dbReference type="ChEBI" id="CHEBI:37565"/>
    </ligand>
</feature>
<feature type="binding site" evidence="2">
    <location>
        <begin position="172"/>
        <end position="175"/>
    </location>
    <ligand>
        <name>GTP</name>
        <dbReference type="ChEBI" id="CHEBI:37565"/>
    </ligand>
</feature>
<sequence length="747" mass="84051">MTLITRVLNSNLPLRLSALKTVRQLQCGYSSHAKYAEHKPIERIRNIGISAHIDSGKTTLTERILFYTGRIAEMHEVRGKDNVGATMDSMELERQRGITIQSAATYTLWKDTNINIIDTPGHVDFTVEVERALRVLDGAVLVLCAVGGVQSQTLTVNRQMKRYNVPCLAFINKLDRLGSNPYRVLSQMRSKLNHNAAFIQLPIGVESNCKGIVDLVQERAIYFEGEHGMDLRLDEIPQDMRVESQERRQELIEHLSNADETLGELFLEEKPFTEADIKAALRRTCIKRTFTPVLVGTALKNKGVQPLLDAIIDYLPNPGEVENLAYIEQEGKEKQQVVLNPARDGKDPFMGLAFKLEAGRFGQLTYLRCYQGVLRKGDNIFNARTNKKVRIARLVRLHSNQMEDVNEVYAGDIFALFGVDCASGDTFTTNPKNHMAMESIFVPEPVVSMAIKPNNTKDRDNFSKAIARFTKEDPTFHFYFDNDVKETLVSGMGELHLEIYAQRMEREYGCPVTLGKPKVAFRETLVGPCEFDYLHKKQSGGSGQYARIIGLMEPLPPNQNTLLEFVDETVGTNVPKQFVPGVEKGFREMSERGMLSGHKLSGVRFRLQDGGHHIVDSSELAFMLAAHGAIKEVFQNGSWQILEPIMLVEVTAPEEFQGAVMGHLSKRHGIITGTEGTEGWFTVYAEVPLNDMFGYASELRSSTQGKGEFTMEYSRYSPCLPEVQEQVVRQYQESQGLGQPEKKKKKN</sequence>
<dbReference type="EMBL" id="CH940649">
    <property type="protein sequence ID" value="EDW64735.1"/>
    <property type="molecule type" value="Genomic_DNA"/>
</dbReference>
<dbReference type="RefSeq" id="XP_002052580.1">
    <property type="nucleotide sequence ID" value="XM_002052544.4"/>
</dbReference>
<dbReference type="SMR" id="B4LS49"/>
<dbReference type="FunCoup" id="B4LS49">
    <property type="interactions" value="2133"/>
</dbReference>
<dbReference type="STRING" id="7244.B4LS49"/>
<dbReference type="EnsemblMetazoa" id="FBtr0233546">
    <property type="protein sequence ID" value="FBpp0232038"/>
    <property type="gene ID" value="FBgn0204790"/>
</dbReference>
<dbReference type="EnsemblMetazoa" id="XM_002052544.3">
    <property type="protein sequence ID" value="XP_002052580.1"/>
    <property type="gene ID" value="LOC6628624"/>
</dbReference>
<dbReference type="GeneID" id="6628624"/>
<dbReference type="KEGG" id="dvi:6628624"/>
<dbReference type="CTD" id="34004"/>
<dbReference type="eggNOG" id="KOG0465">
    <property type="taxonomic scope" value="Eukaryota"/>
</dbReference>
<dbReference type="HOGENOM" id="CLU_002794_4_0_1"/>
<dbReference type="InParanoid" id="B4LS49"/>
<dbReference type="OMA" id="GQFAKVQ"/>
<dbReference type="OrthoDB" id="198619at2759"/>
<dbReference type="PhylomeDB" id="B4LS49"/>
<dbReference type="UniPathway" id="UPA00345"/>
<dbReference type="Proteomes" id="UP000008792">
    <property type="component" value="Unassembled WGS sequence"/>
</dbReference>
<dbReference type="GO" id="GO:0005739">
    <property type="term" value="C:mitochondrion"/>
    <property type="evidence" value="ECO:0007669"/>
    <property type="project" value="UniProtKB-SubCell"/>
</dbReference>
<dbReference type="GO" id="GO:0005634">
    <property type="term" value="C:nucleus"/>
    <property type="evidence" value="ECO:0007669"/>
    <property type="project" value="EnsemblMetazoa"/>
</dbReference>
<dbReference type="GO" id="GO:0005525">
    <property type="term" value="F:GTP binding"/>
    <property type="evidence" value="ECO:0007669"/>
    <property type="project" value="UniProtKB-UniRule"/>
</dbReference>
<dbReference type="GO" id="GO:0003924">
    <property type="term" value="F:GTPase activity"/>
    <property type="evidence" value="ECO:0000250"/>
    <property type="project" value="UniProtKB"/>
</dbReference>
<dbReference type="GO" id="GO:0003746">
    <property type="term" value="F:translation elongation factor activity"/>
    <property type="evidence" value="ECO:0000250"/>
    <property type="project" value="UniProtKB"/>
</dbReference>
<dbReference type="GO" id="GO:0070125">
    <property type="term" value="P:mitochondrial translational elongation"/>
    <property type="evidence" value="ECO:0000250"/>
    <property type="project" value="UniProtKB"/>
</dbReference>
<dbReference type="CDD" id="cd01886">
    <property type="entry name" value="EF-G"/>
    <property type="match status" value="1"/>
</dbReference>
<dbReference type="CDD" id="cd16262">
    <property type="entry name" value="EFG_III"/>
    <property type="match status" value="1"/>
</dbReference>
<dbReference type="CDD" id="cd01434">
    <property type="entry name" value="EFG_mtEFG1_IV"/>
    <property type="match status" value="1"/>
</dbReference>
<dbReference type="CDD" id="cd04097">
    <property type="entry name" value="mtEFG1_C"/>
    <property type="match status" value="1"/>
</dbReference>
<dbReference type="CDD" id="cd04091">
    <property type="entry name" value="mtEFG1_II_like"/>
    <property type="match status" value="1"/>
</dbReference>
<dbReference type="FunFam" id="3.30.230.10:FF:000003">
    <property type="entry name" value="Elongation factor G"/>
    <property type="match status" value="1"/>
</dbReference>
<dbReference type="FunFam" id="3.30.70.240:FF:000001">
    <property type="entry name" value="Elongation factor G"/>
    <property type="match status" value="1"/>
</dbReference>
<dbReference type="FunFam" id="3.30.70.870:FF:000001">
    <property type="entry name" value="Elongation factor G"/>
    <property type="match status" value="1"/>
</dbReference>
<dbReference type="FunFam" id="2.40.30.10:FF:000022">
    <property type="entry name" value="Elongation factor G, mitochondrial"/>
    <property type="match status" value="1"/>
</dbReference>
<dbReference type="FunFam" id="3.40.50.300:FF:000539">
    <property type="entry name" value="Elongation factor G, mitochondrial"/>
    <property type="match status" value="1"/>
</dbReference>
<dbReference type="Gene3D" id="3.30.230.10">
    <property type="match status" value="1"/>
</dbReference>
<dbReference type="Gene3D" id="3.30.70.240">
    <property type="match status" value="1"/>
</dbReference>
<dbReference type="Gene3D" id="3.30.70.870">
    <property type="entry name" value="Elongation Factor G (Translational Gtpase), domain 3"/>
    <property type="match status" value="1"/>
</dbReference>
<dbReference type="Gene3D" id="3.40.50.300">
    <property type="entry name" value="P-loop containing nucleotide triphosphate hydrolases"/>
    <property type="match status" value="1"/>
</dbReference>
<dbReference type="Gene3D" id="2.40.30.10">
    <property type="entry name" value="Translation factors"/>
    <property type="match status" value="1"/>
</dbReference>
<dbReference type="HAMAP" id="MF_00054_B">
    <property type="entry name" value="EF_G_EF_2_B"/>
    <property type="match status" value="1"/>
</dbReference>
<dbReference type="InterPro" id="IPR041095">
    <property type="entry name" value="EFG_II"/>
</dbReference>
<dbReference type="InterPro" id="IPR009022">
    <property type="entry name" value="EFG_III"/>
</dbReference>
<dbReference type="InterPro" id="IPR035647">
    <property type="entry name" value="EFG_III/V"/>
</dbReference>
<dbReference type="InterPro" id="IPR047872">
    <property type="entry name" value="EFG_IV"/>
</dbReference>
<dbReference type="InterPro" id="IPR035649">
    <property type="entry name" value="EFG_V"/>
</dbReference>
<dbReference type="InterPro" id="IPR000640">
    <property type="entry name" value="EFG_V-like"/>
</dbReference>
<dbReference type="InterPro" id="IPR004161">
    <property type="entry name" value="EFTu-like_2"/>
</dbReference>
<dbReference type="InterPro" id="IPR031157">
    <property type="entry name" value="G_TR_CS"/>
</dbReference>
<dbReference type="InterPro" id="IPR027417">
    <property type="entry name" value="P-loop_NTPase"/>
</dbReference>
<dbReference type="InterPro" id="IPR020568">
    <property type="entry name" value="Ribosomal_Su5_D2-typ_SF"/>
</dbReference>
<dbReference type="InterPro" id="IPR014721">
    <property type="entry name" value="Ribsml_uS5_D2-typ_fold_subgr"/>
</dbReference>
<dbReference type="InterPro" id="IPR005225">
    <property type="entry name" value="Small_GTP-bd"/>
</dbReference>
<dbReference type="InterPro" id="IPR000795">
    <property type="entry name" value="T_Tr_GTP-bd_dom"/>
</dbReference>
<dbReference type="InterPro" id="IPR009000">
    <property type="entry name" value="Transl_B-barrel_sf"/>
</dbReference>
<dbReference type="InterPro" id="IPR004540">
    <property type="entry name" value="Transl_elong_EFG/EF2"/>
</dbReference>
<dbReference type="InterPro" id="IPR005517">
    <property type="entry name" value="Transl_elong_EFG/EF2_IV"/>
</dbReference>
<dbReference type="NCBIfam" id="TIGR00484">
    <property type="entry name" value="EF-G"/>
    <property type="match status" value="1"/>
</dbReference>
<dbReference type="NCBIfam" id="NF009381">
    <property type="entry name" value="PRK12740.1-5"/>
    <property type="match status" value="1"/>
</dbReference>
<dbReference type="NCBIfam" id="TIGR00231">
    <property type="entry name" value="small_GTP"/>
    <property type="match status" value="1"/>
</dbReference>
<dbReference type="PANTHER" id="PTHR43636">
    <property type="entry name" value="ELONGATION FACTOR G, MITOCHONDRIAL"/>
    <property type="match status" value="1"/>
</dbReference>
<dbReference type="PANTHER" id="PTHR43636:SF2">
    <property type="entry name" value="ELONGATION FACTOR G, MITOCHONDRIAL"/>
    <property type="match status" value="1"/>
</dbReference>
<dbReference type="Pfam" id="PF00679">
    <property type="entry name" value="EFG_C"/>
    <property type="match status" value="1"/>
</dbReference>
<dbReference type="Pfam" id="PF14492">
    <property type="entry name" value="EFG_III"/>
    <property type="match status" value="1"/>
</dbReference>
<dbReference type="Pfam" id="PF03764">
    <property type="entry name" value="EFG_IV"/>
    <property type="match status" value="1"/>
</dbReference>
<dbReference type="Pfam" id="PF00009">
    <property type="entry name" value="GTP_EFTU"/>
    <property type="match status" value="1"/>
</dbReference>
<dbReference type="Pfam" id="PF03144">
    <property type="entry name" value="GTP_EFTU_D2"/>
    <property type="match status" value="1"/>
</dbReference>
<dbReference type="PRINTS" id="PR00315">
    <property type="entry name" value="ELONGATNFCT"/>
</dbReference>
<dbReference type="SMART" id="SM00838">
    <property type="entry name" value="EFG_C"/>
    <property type="match status" value="1"/>
</dbReference>
<dbReference type="SMART" id="SM00889">
    <property type="entry name" value="EFG_IV"/>
    <property type="match status" value="1"/>
</dbReference>
<dbReference type="SUPFAM" id="SSF54980">
    <property type="entry name" value="EF-G C-terminal domain-like"/>
    <property type="match status" value="2"/>
</dbReference>
<dbReference type="SUPFAM" id="SSF52540">
    <property type="entry name" value="P-loop containing nucleoside triphosphate hydrolases"/>
    <property type="match status" value="1"/>
</dbReference>
<dbReference type="SUPFAM" id="SSF54211">
    <property type="entry name" value="Ribosomal protein S5 domain 2-like"/>
    <property type="match status" value="1"/>
</dbReference>
<dbReference type="SUPFAM" id="SSF50447">
    <property type="entry name" value="Translation proteins"/>
    <property type="match status" value="1"/>
</dbReference>
<dbReference type="PROSITE" id="PS00301">
    <property type="entry name" value="G_TR_1"/>
    <property type="match status" value="1"/>
</dbReference>
<dbReference type="PROSITE" id="PS51722">
    <property type="entry name" value="G_TR_2"/>
    <property type="match status" value="1"/>
</dbReference>
<accession>B4LS49</accession>
<gene>
    <name evidence="1" type="primary">mEFG1</name>
    <name evidence="1" type="synonym">ico</name>
    <name type="ORF">GJ17621</name>
</gene>
<organism>
    <name type="scientific">Drosophila virilis</name>
    <name type="common">Fruit fly</name>
    <dbReference type="NCBI Taxonomy" id="7244"/>
    <lineage>
        <taxon>Eukaryota</taxon>
        <taxon>Metazoa</taxon>
        <taxon>Ecdysozoa</taxon>
        <taxon>Arthropoda</taxon>
        <taxon>Hexapoda</taxon>
        <taxon>Insecta</taxon>
        <taxon>Pterygota</taxon>
        <taxon>Neoptera</taxon>
        <taxon>Endopterygota</taxon>
        <taxon>Diptera</taxon>
        <taxon>Brachycera</taxon>
        <taxon>Muscomorpha</taxon>
        <taxon>Ephydroidea</taxon>
        <taxon>Drosophilidae</taxon>
        <taxon>Drosophila</taxon>
    </lineage>
</organism>
<keyword id="KW-0251">Elongation factor</keyword>
<keyword id="KW-0342">GTP-binding</keyword>
<keyword id="KW-0496">Mitochondrion</keyword>
<keyword id="KW-0547">Nucleotide-binding</keyword>
<keyword id="KW-0648">Protein biosynthesis</keyword>
<keyword id="KW-1185">Reference proteome</keyword>
<keyword id="KW-0809">Transit peptide</keyword>
<comment type="function">
    <text evidence="2">Mitochondrial GTPase that catalyzes the GTP-dependent ribosomal translocation step during translation elongation. During this step, the ribosome changes from the pre-translocational (PRE) to the post-translocational (POST) state as the newly formed A-site-bound peptidyl-tRNA and P-site-bound deacylated tRNA move to the P and E sites, respectively. Catalyzes the coordinated movement of the two tRNA molecules, the mRNA and conformational changes in the ribosome. Essential during development as it acts as a retrograde signal from mitochondria to the nucleus to slow down cell proliferation if mitochondrial energy output is low (By similarity).</text>
</comment>
<comment type="pathway">
    <text evidence="2">Protein biosynthesis; polypeptide chain elongation.</text>
</comment>
<comment type="subcellular location">
    <subcellularLocation>
        <location evidence="2">Mitochondrion</location>
    </subcellularLocation>
</comment>
<comment type="similarity">
    <text evidence="3">Belongs to the TRAFAC class translation factor GTPase superfamily. Classic translation factor GTPase family. EF-G/EF-2 subfamily.</text>
</comment>
<name>EFGM_DROVI</name>